<gene>
    <name type="primary">yuxG</name>
    <name type="synonym">yulA</name>
    <name type="ordered locus">BSU31220</name>
</gene>
<proteinExistence type="inferred from homology"/>
<reference key="1">
    <citation type="journal article" date="1997" name="Microbiology">
        <title>Analysis of the Bacillus subtilis genome: cloning and nucleotide sequence of a 62 kb region between 275 degrees (rrnB) and 284 degrees (pai).</title>
        <authorList>
            <person name="Oudega B."/>
            <person name="Koningstein G."/>
            <person name="Rodrigues L."/>
            <person name="de Sales Ramon M."/>
            <person name="Hilbert H."/>
            <person name="Duesterhoeft A."/>
            <person name="Pohl T.M."/>
            <person name="Weitzenegger T."/>
        </authorList>
    </citation>
    <scope>NUCLEOTIDE SEQUENCE [GENOMIC DNA]</scope>
    <source>
        <strain>168</strain>
    </source>
</reference>
<reference key="2">
    <citation type="journal article" date="1997" name="Nature">
        <title>The complete genome sequence of the Gram-positive bacterium Bacillus subtilis.</title>
        <authorList>
            <person name="Kunst F."/>
            <person name="Ogasawara N."/>
            <person name="Moszer I."/>
            <person name="Albertini A.M."/>
            <person name="Alloni G."/>
            <person name="Azevedo V."/>
            <person name="Bertero M.G."/>
            <person name="Bessieres P."/>
            <person name="Bolotin A."/>
            <person name="Borchert S."/>
            <person name="Borriss R."/>
            <person name="Boursier L."/>
            <person name="Brans A."/>
            <person name="Braun M."/>
            <person name="Brignell S.C."/>
            <person name="Bron S."/>
            <person name="Brouillet S."/>
            <person name="Bruschi C.V."/>
            <person name="Caldwell B."/>
            <person name="Capuano V."/>
            <person name="Carter N.M."/>
            <person name="Choi S.-K."/>
            <person name="Codani J.-J."/>
            <person name="Connerton I.F."/>
            <person name="Cummings N.J."/>
            <person name="Daniel R.A."/>
            <person name="Denizot F."/>
            <person name="Devine K.M."/>
            <person name="Duesterhoeft A."/>
            <person name="Ehrlich S.D."/>
            <person name="Emmerson P.T."/>
            <person name="Entian K.-D."/>
            <person name="Errington J."/>
            <person name="Fabret C."/>
            <person name="Ferrari E."/>
            <person name="Foulger D."/>
            <person name="Fritz C."/>
            <person name="Fujita M."/>
            <person name="Fujita Y."/>
            <person name="Fuma S."/>
            <person name="Galizzi A."/>
            <person name="Galleron N."/>
            <person name="Ghim S.-Y."/>
            <person name="Glaser P."/>
            <person name="Goffeau A."/>
            <person name="Golightly E.J."/>
            <person name="Grandi G."/>
            <person name="Guiseppi G."/>
            <person name="Guy B.J."/>
            <person name="Haga K."/>
            <person name="Haiech J."/>
            <person name="Harwood C.R."/>
            <person name="Henaut A."/>
            <person name="Hilbert H."/>
            <person name="Holsappel S."/>
            <person name="Hosono S."/>
            <person name="Hullo M.-F."/>
            <person name="Itaya M."/>
            <person name="Jones L.-M."/>
            <person name="Joris B."/>
            <person name="Karamata D."/>
            <person name="Kasahara Y."/>
            <person name="Klaerr-Blanchard M."/>
            <person name="Klein C."/>
            <person name="Kobayashi Y."/>
            <person name="Koetter P."/>
            <person name="Koningstein G."/>
            <person name="Krogh S."/>
            <person name="Kumano M."/>
            <person name="Kurita K."/>
            <person name="Lapidus A."/>
            <person name="Lardinois S."/>
            <person name="Lauber J."/>
            <person name="Lazarevic V."/>
            <person name="Lee S.-M."/>
            <person name="Levine A."/>
            <person name="Liu H."/>
            <person name="Masuda S."/>
            <person name="Mauel C."/>
            <person name="Medigue C."/>
            <person name="Medina N."/>
            <person name="Mellado R.P."/>
            <person name="Mizuno M."/>
            <person name="Moestl D."/>
            <person name="Nakai S."/>
            <person name="Noback M."/>
            <person name="Noone D."/>
            <person name="O'Reilly M."/>
            <person name="Ogawa K."/>
            <person name="Ogiwara A."/>
            <person name="Oudega B."/>
            <person name="Park S.-H."/>
            <person name="Parro V."/>
            <person name="Pohl T.M."/>
            <person name="Portetelle D."/>
            <person name="Porwollik S."/>
            <person name="Prescott A.M."/>
            <person name="Presecan E."/>
            <person name="Pujic P."/>
            <person name="Purnelle B."/>
            <person name="Rapoport G."/>
            <person name="Rey M."/>
            <person name="Reynolds S."/>
            <person name="Rieger M."/>
            <person name="Rivolta C."/>
            <person name="Rocha E."/>
            <person name="Roche B."/>
            <person name="Rose M."/>
            <person name="Sadaie Y."/>
            <person name="Sato T."/>
            <person name="Scanlan E."/>
            <person name="Schleich S."/>
            <person name="Schroeter R."/>
            <person name="Scoffone F."/>
            <person name="Sekiguchi J."/>
            <person name="Sekowska A."/>
            <person name="Seror S.J."/>
            <person name="Serror P."/>
            <person name="Shin B.-S."/>
            <person name="Soldo B."/>
            <person name="Sorokin A."/>
            <person name="Tacconi E."/>
            <person name="Takagi T."/>
            <person name="Takahashi H."/>
            <person name="Takemaru K."/>
            <person name="Takeuchi M."/>
            <person name="Tamakoshi A."/>
            <person name="Tanaka T."/>
            <person name="Terpstra P."/>
            <person name="Tognoni A."/>
            <person name="Tosato V."/>
            <person name="Uchiyama S."/>
            <person name="Vandenbol M."/>
            <person name="Vannier F."/>
            <person name="Vassarotti A."/>
            <person name="Viari A."/>
            <person name="Wambutt R."/>
            <person name="Wedler E."/>
            <person name="Wedler H."/>
            <person name="Weitzenegger T."/>
            <person name="Winters P."/>
            <person name="Wipat A."/>
            <person name="Yamamoto H."/>
            <person name="Yamane K."/>
            <person name="Yasumoto K."/>
            <person name="Yata K."/>
            <person name="Yoshida K."/>
            <person name="Yoshikawa H.-F."/>
            <person name="Zumstein E."/>
            <person name="Yoshikawa H."/>
            <person name="Danchin A."/>
        </authorList>
    </citation>
    <scope>NUCLEOTIDE SEQUENCE [LARGE SCALE GENOMIC DNA]</scope>
    <source>
        <strain>168</strain>
    </source>
</reference>
<reference key="3">
    <citation type="journal article" date="1994" name="J. Biol. Chem.">
        <title>Cloning and characterization of genes encoding methyl-accepting chemotaxis proteins in Bacillus subtilis.</title>
        <authorList>
            <person name="Hanlon D.W."/>
            <person name="Ordal G.W."/>
        </authorList>
    </citation>
    <scope>NUCLEOTIDE SEQUENCE [GENOMIC DNA] OF 1-49</scope>
    <source>
        <strain>168 / OI1085</strain>
    </source>
</reference>
<comment type="similarity">
    <text evidence="3">Belongs to the short-chain dehydrogenases/reductases (SDR) family.</text>
</comment>
<dbReference type="EC" id="1.-.-.-"/>
<dbReference type="EMBL" id="Z93938">
    <property type="protein sequence ID" value="CAB07952.1"/>
    <property type="molecule type" value="Genomic_DNA"/>
</dbReference>
<dbReference type="EMBL" id="AL009126">
    <property type="protein sequence ID" value="CAB15100.1"/>
    <property type="molecule type" value="Genomic_DNA"/>
</dbReference>
<dbReference type="EMBL" id="L29189">
    <property type="protein sequence ID" value="AAA20558.2"/>
    <property type="molecule type" value="Genomic_DNA"/>
</dbReference>
<dbReference type="PIR" id="H70024">
    <property type="entry name" value="H70024"/>
</dbReference>
<dbReference type="RefSeq" id="WP_003244479.1">
    <property type="nucleotide sequence ID" value="NZ_OZ025638.1"/>
</dbReference>
<dbReference type="SMR" id="P40747"/>
<dbReference type="FunCoup" id="P40747">
    <property type="interactions" value="60"/>
</dbReference>
<dbReference type="STRING" id="224308.BSU31220"/>
<dbReference type="PaxDb" id="224308-BSU31220"/>
<dbReference type="DNASU" id="938841"/>
<dbReference type="EnsemblBacteria" id="CAB15100">
    <property type="protein sequence ID" value="CAB15100"/>
    <property type="gene ID" value="BSU_31220"/>
</dbReference>
<dbReference type="GeneID" id="938841"/>
<dbReference type="KEGG" id="bsu:BSU31220"/>
<dbReference type="PATRIC" id="fig|224308.179.peg.3382"/>
<dbReference type="eggNOG" id="COG1028">
    <property type="taxonomic scope" value="Bacteria"/>
</dbReference>
<dbReference type="eggNOG" id="COG3347">
    <property type="taxonomic scope" value="Bacteria"/>
</dbReference>
<dbReference type="InParanoid" id="P40747"/>
<dbReference type="OrthoDB" id="9774430at2"/>
<dbReference type="PhylomeDB" id="P40747"/>
<dbReference type="BioCyc" id="BSUB:BSU31220-MONOMER"/>
<dbReference type="BioCyc" id="MetaCyc:BSU31220-MONOMER"/>
<dbReference type="Proteomes" id="UP000001570">
    <property type="component" value="Chromosome"/>
</dbReference>
<dbReference type="GO" id="GO:0016491">
    <property type="term" value="F:oxidoreductase activity"/>
    <property type="evidence" value="ECO:0007669"/>
    <property type="project" value="UniProtKB-KW"/>
</dbReference>
<dbReference type="CDD" id="cd08943">
    <property type="entry name" value="R1PA_ADH_SDR_c"/>
    <property type="match status" value="1"/>
</dbReference>
<dbReference type="FunFam" id="3.40.50.720:FF:000084">
    <property type="entry name" value="Short-chain dehydrogenase reductase"/>
    <property type="match status" value="1"/>
</dbReference>
<dbReference type="Gene3D" id="3.40.225.10">
    <property type="entry name" value="Class II aldolase/adducin N-terminal domain"/>
    <property type="match status" value="1"/>
</dbReference>
<dbReference type="Gene3D" id="3.40.50.720">
    <property type="entry name" value="NAD(P)-binding Rossmann-like Domain"/>
    <property type="match status" value="1"/>
</dbReference>
<dbReference type="InterPro" id="IPR001303">
    <property type="entry name" value="Aldolase_II/adducin_N"/>
</dbReference>
<dbReference type="InterPro" id="IPR036409">
    <property type="entry name" value="Aldolase_II/adducin_N_sf"/>
</dbReference>
<dbReference type="InterPro" id="IPR013454">
    <property type="entry name" value="Bifunc_RhaD/ADH"/>
</dbReference>
<dbReference type="InterPro" id="IPR036291">
    <property type="entry name" value="NAD(P)-bd_dom_sf"/>
</dbReference>
<dbReference type="InterPro" id="IPR002347">
    <property type="entry name" value="SDR_fam"/>
</dbReference>
<dbReference type="NCBIfam" id="NF006189">
    <property type="entry name" value="PRK08324.1-3"/>
    <property type="match status" value="1"/>
</dbReference>
<dbReference type="NCBIfam" id="NF006190">
    <property type="entry name" value="PRK08324.1-4"/>
    <property type="match status" value="1"/>
</dbReference>
<dbReference type="NCBIfam" id="TIGR02632">
    <property type="entry name" value="RhaD_aldol-ADH"/>
    <property type="match status" value="1"/>
</dbReference>
<dbReference type="PANTHER" id="PTHR43669">
    <property type="entry name" value="5-KETO-D-GLUCONATE 5-REDUCTASE"/>
    <property type="match status" value="1"/>
</dbReference>
<dbReference type="PANTHER" id="PTHR43669:SF8">
    <property type="entry name" value="SHORT-CHAIN TYPE DEHYDROGENASE_REDUCTASE-RELATED"/>
    <property type="match status" value="1"/>
</dbReference>
<dbReference type="Pfam" id="PF00106">
    <property type="entry name" value="adh_short"/>
    <property type="match status" value="1"/>
</dbReference>
<dbReference type="Pfam" id="PF00596">
    <property type="entry name" value="Aldolase_II"/>
    <property type="match status" value="1"/>
</dbReference>
<dbReference type="PRINTS" id="PR00081">
    <property type="entry name" value="GDHRDH"/>
</dbReference>
<dbReference type="SMART" id="SM01007">
    <property type="entry name" value="Aldolase_II"/>
    <property type="match status" value="1"/>
</dbReference>
<dbReference type="SUPFAM" id="SSF53639">
    <property type="entry name" value="AraD/HMP-PK domain-like"/>
    <property type="match status" value="1"/>
</dbReference>
<dbReference type="SUPFAM" id="SSF51735">
    <property type="entry name" value="NAD(P)-binding Rossmann-fold domains"/>
    <property type="match status" value="1"/>
</dbReference>
<dbReference type="PROSITE" id="PS00061">
    <property type="entry name" value="ADH_SHORT"/>
    <property type="match status" value="1"/>
</dbReference>
<evidence type="ECO:0000250" key="1"/>
<evidence type="ECO:0000255" key="2">
    <source>
        <dbReference type="PROSITE-ProRule" id="PRU10001"/>
    </source>
</evidence>
<evidence type="ECO:0000305" key="3"/>
<name>YUXG_BACSU</name>
<protein>
    <recommendedName>
        <fullName>Uncharacterized oxidoreductase YuxG</fullName>
        <ecNumber>1.-.-.-</ecNumber>
    </recommendedName>
    <alternativeName>
        <fullName>ORF2</fullName>
    </alternativeName>
</protein>
<accession>P40747</accession>
<organism>
    <name type="scientific">Bacillus subtilis (strain 168)</name>
    <dbReference type="NCBI Taxonomy" id="224308"/>
    <lineage>
        <taxon>Bacteria</taxon>
        <taxon>Bacillati</taxon>
        <taxon>Bacillota</taxon>
        <taxon>Bacilli</taxon>
        <taxon>Bacillales</taxon>
        <taxon>Bacillaceae</taxon>
        <taxon>Bacillus</taxon>
    </lineage>
</organism>
<keyword id="KW-0560">Oxidoreductase</keyword>
<keyword id="KW-1185">Reference proteome</keyword>
<feature type="chain" id="PRO_0000054850" description="Uncharacterized oxidoreductase YuxG">
    <location>
        <begin position="1"/>
        <end position="689"/>
    </location>
</feature>
<feature type="active site" description="Proton acceptor" evidence="2">
    <location>
        <position position="579"/>
    </location>
</feature>
<feature type="binding site" evidence="1">
    <location>
        <position position="566"/>
    </location>
    <ligand>
        <name>substrate</name>
    </ligand>
</feature>
<sequence length="689" mass="76020">MVKHIWDSERAAQLPKGVEELVYRSNLIGSDRTVCNWGGGNTSMKTTEKDFRGREIEVMWVKGSGSDLATMKAHNFSGLKLDDIRPLIKRDQMPDEEMVDYLSHCMIDSKHPRPSIETLLHAFLPYKHVDHTHPDAIISICCADNGKQIAEDIYGNRFVWVPYVRPGFTLSKMIAEGVANNPHAELVLMEKHGLVTWGETSETCYQKTISIIQEAEQYINDRINQHEVFGGKRYQPLPEDKRKQILAGIMPVIRGAVSEEKKMILSYDDHDDVLEFVNSVQAPALSQIGAACPDHLVHTKRVPLYIDWNPETQDVHKLADLIKSGVETFTSEYQAYFTRNQQDGDQIFESAPRVILIPGIGMVNTGKSYAMSKVSGALYRRAIAVMKGATALGQFVSLHENESYHVEYWPLELYKLTLAPPEAEFSRKVALITGGAGGIGSAACRRFAAEGGHVIVADLNIEGAQKIAGEINDAYGKGRAMAVKMDVTKEEDVQSAFERAALAYGGIDIVVNNAGLATSSPFDETSLKEWNLNMNVLGTGYFLVAREAFKQMKHQNRGGSMVFVGSKNSVYAGKNASAYSSVKALETHLARCIAAEGGEFGIRVNSVLPDAVLQGSAIWGSSWREERAAAYGIEPDQLEEHYRKRTALLVNIYPEDIAEAIAFFASSKAEKTTGCMITVDGGVPAAFTR</sequence>